<evidence type="ECO:0000255" key="1">
    <source>
        <dbReference type="HAMAP-Rule" id="MF_00482"/>
    </source>
</evidence>
<keyword id="KW-0004">4Fe-4S</keyword>
<keyword id="KW-0148">Chlorophyll</keyword>
<keyword id="KW-0150">Chloroplast</keyword>
<keyword id="KW-0157">Chromophore</keyword>
<keyword id="KW-0249">Electron transport</keyword>
<keyword id="KW-0408">Iron</keyword>
<keyword id="KW-0411">Iron-sulfur</keyword>
<keyword id="KW-0460">Magnesium</keyword>
<keyword id="KW-0472">Membrane</keyword>
<keyword id="KW-0479">Metal-binding</keyword>
<keyword id="KW-0560">Oxidoreductase</keyword>
<keyword id="KW-0602">Photosynthesis</keyword>
<keyword id="KW-0603">Photosystem I</keyword>
<keyword id="KW-0934">Plastid</keyword>
<keyword id="KW-0793">Thylakoid</keyword>
<keyword id="KW-0812">Transmembrane</keyword>
<keyword id="KW-1133">Transmembrane helix</keyword>
<keyword id="KW-0813">Transport</keyword>
<accession>A4GG98</accession>
<accession>A8W819</accession>
<name>PSAB_PHAVU</name>
<dbReference type="EC" id="1.97.1.12" evidence="1"/>
<dbReference type="EMBL" id="DQ886273">
    <property type="protein sequence ID" value="ABH88079.1"/>
    <property type="molecule type" value="Genomic_DNA"/>
</dbReference>
<dbReference type="EMBL" id="EU196765">
    <property type="protein sequence ID" value="ABW22789.1"/>
    <property type="molecule type" value="Genomic_DNA"/>
</dbReference>
<dbReference type="RefSeq" id="YP_001122799.1">
    <property type="nucleotide sequence ID" value="NC_009259.1"/>
</dbReference>
<dbReference type="SMR" id="A4GG98"/>
<dbReference type="GeneID" id="4961769"/>
<dbReference type="KEGG" id="pvu:4961769"/>
<dbReference type="PhylomeDB" id="A4GG98"/>
<dbReference type="GO" id="GO:0009535">
    <property type="term" value="C:chloroplast thylakoid membrane"/>
    <property type="evidence" value="ECO:0007669"/>
    <property type="project" value="UniProtKB-SubCell"/>
</dbReference>
<dbReference type="GO" id="GO:0009522">
    <property type="term" value="C:photosystem I"/>
    <property type="evidence" value="ECO:0007669"/>
    <property type="project" value="UniProtKB-KW"/>
</dbReference>
<dbReference type="GO" id="GO:0051539">
    <property type="term" value="F:4 iron, 4 sulfur cluster binding"/>
    <property type="evidence" value="ECO:0007669"/>
    <property type="project" value="UniProtKB-KW"/>
</dbReference>
<dbReference type="GO" id="GO:0016168">
    <property type="term" value="F:chlorophyll binding"/>
    <property type="evidence" value="ECO:0007669"/>
    <property type="project" value="UniProtKB-KW"/>
</dbReference>
<dbReference type="GO" id="GO:0009055">
    <property type="term" value="F:electron transfer activity"/>
    <property type="evidence" value="ECO:0007669"/>
    <property type="project" value="UniProtKB-UniRule"/>
</dbReference>
<dbReference type="GO" id="GO:0000287">
    <property type="term" value="F:magnesium ion binding"/>
    <property type="evidence" value="ECO:0007669"/>
    <property type="project" value="UniProtKB-UniRule"/>
</dbReference>
<dbReference type="GO" id="GO:0016491">
    <property type="term" value="F:oxidoreductase activity"/>
    <property type="evidence" value="ECO:0007669"/>
    <property type="project" value="UniProtKB-KW"/>
</dbReference>
<dbReference type="GO" id="GO:0015979">
    <property type="term" value="P:photosynthesis"/>
    <property type="evidence" value="ECO:0007669"/>
    <property type="project" value="UniProtKB-UniRule"/>
</dbReference>
<dbReference type="FunFam" id="1.20.1130.10:FF:000001">
    <property type="entry name" value="Photosystem I P700 chlorophyll a apoprotein A2"/>
    <property type="match status" value="1"/>
</dbReference>
<dbReference type="Gene3D" id="1.20.1130.10">
    <property type="entry name" value="Photosystem I PsaA/PsaB"/>
    <property type="match status" value="1"/>
</dbReference>
<dbReference type="HAMAP" id="MF_00482">
    <property type="entry name" value="PSI_PsaB"/>
    <property type="match status" value="1"/>
</dbReference>
<dbReference type="InterPro" id="IPR001280">
    <property type="entry name" value="PSI_PsaA/B"/>
</dbReference>
<dbReference type="InterPro" id="IPR020586">
    <property type="entry name" value="PSI_PsaA/B_CS"/>
</dbReference>
<dbReference type="InterPro" id="IPR036408">
    <property type="entry name" value="PSI_PsaA/B_sf"/>
</dbReference>
<dbReference type="InterPro" id="IPR006244">
    <property type="entry name" value="PSI_PsaB"/>
</dbReference>
<dbReference type="NCBIfam" id="TIGR01336">
    <property type="entry name" value="psaB"/>
    <property type="match status" value="1"/>
</dbReference>
<dbReference type="PANTHER" id="PTHR30128">
    <property type="entry name" value="OUTER MEMBRANE PROTEIN, OMPA-RELATED"/>
    <property type="match status" value="1"/>
</dbReference>
<dbReference type="PANTHER" id="PTHR30128:SF19">
    <property type="entry name" value="PHOTOSYSTEM I P700 CHLOROPHYLL A APOPROTEIN A1-RELATED"/>
    <property type="match status" value="1"/>
</dbReference>
<dbReference type="Pfam" id="PF00223">
    <property type="entry name" value="PsaA_PsaB"/>
    <property type="match status" value="1"/>
</dbReference>
<dbReference type="PIRSF" id="PIRSF002905">
    <property type="entry name" value="PSI_A"/>
    <property type="match status" value="1"/>
</dbReference>
<dbReference type="PRINTS" id="PR00257">
    <property type="entry name" value="PHOTSYSPSAAB"/>
</dbReference>
<dbReference type="SUPFAM" id="SSF81558">
    <property type="entry name" value="Photosystem I subunits PsaA/PsaB"/>
    <property type="match status" value="1"/>
</dbReference>
<dbReference type="PROSITE" id="PS00419">
    <property type="entry name" value="PHOTOSYSTEM_I_PSAAB"/>
    <property type="match status" value="1"/>
</dbReference>
<organism>
    <name type="scientific">Phaseolus vulgaris</name>
    <name type="common">Kidney bean</name>
    <name type="synonym">French bean</name>
    <dbReference type="NCBI Taxonomy" id="3885"/>
    <lineage>
        <taxon>Eukaryota</taxon>
        <taxon>Viridiplantae</taxon>
        <taxon>Streptophyta</taxon>
        <taxon>Embryophyta</taxon>
        <taxon>Tracheophyta</taxon>
        <taxon>Spermatophyta</taxon>
        <taxon>Magnoliopsida</taxon>
        <taxon>eudicotyledons</taxon>
        <taxon>Gunneridae</taxon>
        <taxon>Pentapetalae</taxon>
        <taxon>rosids</taxon>
        <taxon>fabids</taxon>
        <taxon>Fabales</taxon>
        <taxon>Fabaceae</taxon>
        <taxon>Papilionoideae</taxon>
        <taxon>50 kb inversion clade</taxon>
        <taxon>NPAAA clade</taxon>
        <taxon>indigoferoid/millettioid clade</taxon>
        <taxon>Phaseoleae</taxon>
        <taxon>Phaseolus</taxon>
    </lineage>
</organism>
<gene>
    <name evidence="1" type="primary">psaB</name>
</gene>
<feature type="chain" id="PRO_0000300053" description="Photosystem I P700 chlorophyll a apoprotein A2">
    <location>
        <begin position="1"/>
        <end position="734"/>
    </location>
</feature>
<feature type="transmembrane region" description="Helical; Name=I" evidence="1">
    <location>
        <begin position="46"/>
        <end position="69"/>
    </location>
</feature>
<feature type="transmembrane region" description="Helical; Name=II" evidence="1">
    <location>
        <begin position="135"/>
        <end position="158"/>
    </location>
</feature>
<feature type="transmembrane region" description="Helical; Name=III" evidence="1">
    <location>
        <begin position="175"/>
        <end position="199"/>
    </location>
</feature>
<feature type="transmembrane region" description="Helical; Name=IV" evidence="1">
    <location>
        <begin position="273"/>
        <end position="291"/>
    </location>
</feature>
<feature type="transmembrane region" description="Helical; Name=V" evidence="1">
    <location>
        <begin position="330"/>
        <end position="353"/>
    </location>
</feature>
<feature type="transmembrane region" description="Helical; Name=VI" evidence="1">
    <location>
        <begin position="369"/>
        <end position="395"/>
    </location>
</feature>
<feature type="transmembrane region" description="Helical; Name=VII" evidence="1">
    <location>
        <begin position="417"/>
        <end position="439"/>
    </location>
</feature>
<feature type="transmembrane region" description="Helical; Name=VIII" evidence="1">
    <location>
        <begin position="517"/>
        <end position="535"/>
    </location>
</feature>
<feature type="transmembrane region" description="Helical; Name=IX" evidence="1">
    <location>
        <begin position="575"/>
        <end position="596"/>
    </location>
</feature>
<feature type="transmembrane region" description="Helical; Name=X" evidence="1">
    <location>
        <begin position="643"/>
        <end position="665"/>
    </location>
</feature>
<feature type="transmembrane region" description="Helical; Name=XI" evidence="1">
    <location>
        <begin position="707"/>
        <end position="727"/>
    </location>
</feature>
<feature type="binding site" evidence="1">
    <location>
        <position position="559"/>
    </location>
    <ligand>
        <name>[4Fe-4S] cluster</name>
        <dbReference type="ChEBI" id="CHEBI:49883"/>
        <note>ligand shared between dimeric partners</note>
    </ligand>
</feature>
<feature type="binding site" evidence="1">
    <location>
        <position position="568"/>
    </location>
    <ligand>
        <name>[4Fe-4S] cluster</name>
        <dbReference type="ChEBI" id="CHEBI:49883"/>
        <note>ligand shared between dimeric partners</note>
    </ligand>
</feature>
<feature type="binding site" description="axial binding residue" evidence="1">
    <location>
        <position position="654"/>
    </location>
    <ligand>
        <name>chlorophyll a</name>
        <dbReference type="ChEBI" id="CHEBI:58416"/>
        <label>B1</label>
    </ligand>
    <ligandPart>
        <name>Mg</name>
        <dbReference type="ChEBI" id="CHEBI:25107"/>
    </ligandPart>
</feature>
<feature type="binding site" description="axial binding residue" evidence="1">
    <location>
        <position position="662"/>
    </location>
    <ligand>
        <name>chlorophyll a</name>
        <dbReference type="ChEBI" id="CHEBI:58416"/>
        <label>B3</label>
    </ligand>
    <ligandPart>
        <name>Mg</name>
        <dbReference type="ChEBI" id="CHEBI:25107"/>
    </ligandPart>
</feature>
<feature type="binding site" evidence="1">
    <location>
        <position position="670"/>
    </location>
    <ligand>
        <name>chlorophyll a</name>
        <dbReference type="ChEBI" id="CHEBI:58416"/>
        <label>B3</label>
    </ligand>
</feature>
<feature type="binding site" evidence="1">
    <location>
        <position position="671"/>
    </location>
    <ligand>
        <name>phylloquinone</name>
        <dbReference type="ChEBI" id="CHEBI:18067"/>
        <label>B</label>
    </ligand>
</feature>
<reference key="1">
    <citation type="journal article" date="2007" name="BMC Genomics">
        <title>Rapid evolutionary change of common bean (Phaseolus vulgaris L) plastome, and the genomic diversification of legume chloroplasts.</title>
        <authorList>
            <person name="Guo X."/>
            <person name="Castillo-Ramirez S."/>
            <person name="Gonzalez V."/>
            <person name="Bustos P."/>
            <person name="Fernandez-Vazquez J.L."/>
            <person name="Santamaria R.I."/>
            <person name="Arellano J."/>
            <person name="Cevallos M.A."/>
            <person name="Davila G."/>
        </authorList>
    </citation>
    <scope>NUCLEOTIDE SEQUENCE [LARGE SCALE GENOMIC DNA]</scope>
    <source>
        <strain>cv. Negro Jamapa</strain>
    </source>
</reference>
<reference key="2">
    <citation type="submission" date="2007-10" db="EMBL/GenBank/DDBJ databases">
        <title>Complete nucleotide sequence of the plastid genome of the common bean, Phaseolus vulgaris.</title>
        <authorList>
            <person name="Moore M.J."/>
            <person name="Triplett E.W."/>
            <person name="Broughton W.J."/>
            <person name="Soltis P.S."/>
            <person name="Soltis D.E."/>
        </authorList>
    </citation>
    <scope>NUCLEOTIDE SEQUENCE [LARGE SCALE GENOMIC DNA]</scope>
</reference>
<proteinExistence type="inferred from homology"/>
<geneLocation type="chloroplast"/>
<comment type="function">
    <text evidence="1">PsaA and PsaB bind P700, the primary electron donor of photosystem I (PSI), as well as the electron acceptors A0, A1 and FX. PSI is a plastocyanin-ferredoxin oxidoreductase, converting photonic excitation into a charge separation, which transfers an electron from the donor P700 chlorophyll pair to the spectroscopically characterized acceptors A0, A1, FX, FA and FB in turn. Oxidized P700 is reduced on the lumenal side of the thylakoid membrane by plastocyanin.</text>
</comment>
<comment type="catalytic activity">
    <reaction evidence="1">
        <text>reduced [plastocyanin] + hnu + oxidized [2Fe-2S]-[ferredoxin] = oxidized [plastocyanin] + reduced [2Fe-2S]-[ferredoxin]</text>
        <dbReference type="Rhea" id="RHEA:30407"/>
        <dbReference type="Rhea" id="RHEA-COMP:10000"/>
        <dbReference type="Rhea" id="RHEA-COMP:10001"/>
        <dbReference type="Rhea" id="RHEA-COMP:10039"/>
        <dbReference type="Rhea" id="RHEA-COMP:10040"/>
        <dbReference type="ChEBI" id="CHEBI:29036"/>
        <dbReference type="ChEBI" id="CHEBI:30212"/>
        <dbReference type="ChEBI" id="CHEBI:33737"/>
        <dbReference type="ChEBI" id="CHEBI:33738"/>
        <dbReference type="ChEBI" id="CHEBI:49552"/>
        <dbReference type="EC" id="1.97.1.12"/>
    </reaction>
</comment>
<comment type="cofactor">
    <text evidence="1">P700 is a chlorophyll a/chlorophyll a' dimer, A0 is one or more chlorophyll a, A1 is one or both phylloquinones and FX is a shared 4Fe-4S iron-sulfur center.</text>
</comment>
<comment type="subunit">
    <text evidence="1">The PsaA/B heterodimer binds the P700 chlorophyll special pair and subsequent electron acceptors. PSI consists of a core antenna complex that captures photons, and an electron transfer chain that converts photonic excitation into a charge separation. The eukaryotic PSI reaction center is composed of at least 11 subunits.</text>
</comment>
<comment type="subcellular location">
    <subcellularLocation>
        <location evidence="1">Plastid</location>
        <location evidence="1">Chloroplast thylakoid membrane</location>
        <topology evidence="1">Multi-pass membrane protein</topology>
    </subcellularLocation>
</comment>
<comment type="similarity">
    <text evidence="1">Belongs to the PsaA/PsaB family.</text>
</comment>
<sequence length="734" mass="82383">MALRFPSFSQGLAQDPTTRRIWFGIATAHDFESHDDITEERLYQNIFASHFGQLAIIFLWTSGNLFHVAWQGNFETWVQDPLHVRPIAHAIWDPHFGQPAVEAFTRGGALGPVNIAYSGVYQWWYTIGLRTNGDLYTGAIFLLILSTISLIAGWLHLQPKWKPSVSWFKNAESRLNHHLSGLFGVSSLAWTGHLVHVAIPGSRGEYVRWNNLLGILPHPEGLGPFFTGQWNLYAQNPDSNNHIFGTPQGAGTAILTLLGGFHPQTQSLWLTDIAHHHLAIAFIFLVAGHMYRTNFGIGHSIKDLLEVHTPPGGRLGRGHKGLYDTINNSIHFQLGLALASLGVITSLVAQHMYSLPAYAFIAQDFTTQAALYTHHQYIAGFIMTGAFAHGAIFFIRDYNPEQNKDNVLARMLDHKEAIISHLSWASLFLGFHTLGLYVHNDVMLAFGTPEKQILIEPIFAQWIQSAHGKTSYGFDILLSSTNSPAFNAGRSIWLPGWLNAVNENSNSLFLTIGPGDFLVHHAIALGLHTTTLILVKGALDARGSKLMPDKKDFGYSFPCDGPGRGGTCDISAWDAFYLAVFWMLNTIGWVTFYWHWKHITLWQGNISQFNESSTYLMGWLRDYLWLNSSQLINGYNPFGMNSLSVWAWMFLFGHLVWATGFMFLISWRGYWQELIETLAWAHERTPLANLIRWRDKPVALSIVQARLVGLAHFSVGYIFTYAAFLIASTSGKFG</sequence>
<protein>
    <recommendedName>
        <fullName evidence="1">Photosystem I P700 chlorophyll a apoprotein A2</fullName>
        <ecNumber evidence="1">1.97.1.12</ecNumber>
    </recommendedName>
    <alternativeName>
        <fullName evidence="1">PSI-B</fullName>
    </alternativeName>
    <alternativeName>
        <fullName evidence="1">PsaB</fullName>
    </alternativeName>
</protein>